<protein>
    <recommendedName>
        <fullName>Plastocyanin, chloroplastic</fullName>
    </recommendedName>
</protein>
<name>PLAS_SILLB</name>
<organism>
    <name type="scientific">Silene latifolia subsp. alba</name>
    <name type="common">White campion</name>
    <name type="synonym">Lychnis alba</name>
    <dbReference type="NCBI Taxonomy" id="52853"/>
    <lineage>
        <taxon>Eukaryota</taxon>
        <taxon>Viridiplantae</taxon>
        <taxon>Streptophyta</taxon>
        <taxon>Embryophyta</taxon>
        <taxon>Tracheophyta</taxon>
        <taxon>Spermatophyta</taxon>
        <taxon>Magnoliopsida</taxon>
        <taxon>eudicotyledons</taxon>
        <taxon>Gunneridae</taxon>
        <taxon>Pentapetalae</taxon>
        <taxon>Caryophyllales</taxon>
        <taxon>Caryophyllaceae</taxon>
        <taxon>Sileneae</taxon>
        <taxon>Silene</taxon>
        <taxon>Silene subgen. Behenantha</taxon>
        <taxon>Silene sect. Melandrium</taxon>
    </lineage>
</organism>
<keyword id="KW-0002">3D-structure</keyword>
<keyword id="KW-0150">Chloroplast</keyword>
<keyword id="KW-0186">Copper</keyword>
<keyword id="KW-0249">Electron transport</keyword>
<keyword id="KW-0472">Membrane</keyword>
<keyword id="KW-0479">Metal-binding</keyword>
<keyword id="KW-0934">Plastid</keyword>
<keyword id="KW-0793">Thylakoid</keyword>
<keyword id="KW-0809">Transit peptide</keyword>
<keyword id="KW-0813">Transport</keyword>
<feature type="transit peptide" description="Chloroplast">
    <location>
        <begin position="1"/>
        <end position="66"/>
    </location>
</feature>
<feature type="chain" id="PRO_0000002896" description="Plastocyanin, chloroplastic">
    <location>
        <begin position="67"/>
        <end position="165"/>
    </location>
</feature>
<feature type="domain" description="Plastocyanin-like">
    <location>
        <begin position="67"/>
        <end position="165"/>
    </location>
</feature>
<feature type="binding site" evidence="1">
    <location>
        <position position="103"/>
    </location>
    <ligand>
        <name>Cu cation</name>
        <dbReference type="ChEBI" id="CHEBI:23378"/>
    </ligand>
</feature>
<feature type="binding site" evidence="1">
    <location>
        <position position="150"/>
    </location>
    <ligand>
        <name>Cu cation</name>
        <dbReference type="ChEBI" id="CHEBI:23378"/>
    </ligand>
</feature>
<feature type="binding site" evidence="1">
    <location>
        <position position="153"/>
    </location>
    <ligand>
        <name>Cu cation</name>
        <dbReference type="ChEBI" id="CHEBI:23378"/>
    </ligand>
</feature>
<feature type="binding site" evidence="1">
    <location>
        <position position="158"/>
    </location>
    <ligand>
        <name>Cu cation</name>
        <dbReference type="ChEBI" id="CHEBI:23378"/>
    </ligand>
</feature>
<feature type="mutagenesis site" description="Decreased rate of electron transfer." evidence="1">
    <original>ED</original>
    <variation>KK</variation>
    <location>
        <begin position="109"/>
        <end position="110"/>
    </location>
</feature>
<feature type="strand" evidence="4">
    <location>
        <begin position="68"/>
        <end position="72"/>
    </location>
</feature>
<feature type="strand" evidence="3">
    <location>
        <begin position="74"/>
        <end position="76"/>
    </location>
</feature>
<feature type="strand" evidence="4">
    <location>
        <begin position="79"/>
        <end position="88"/>
    </location>
</feature>
<feature type="strand" evidence="4">
    <location>
        <begin position="91"/>
        <end position="97"/>
    </location>
</feature>
<feature type="strand" evidence="3">
    <location>
        <begin position="99"/>
        <end position="101"/>
    </location>
</feature>
<feature type="helix" evidence="4">
    <location>
        <begin position="118"/>
        <end position="121"/>
    </location>
</feature>
<feature type="strand" evidence="4">
    <location>
        <begin position="135"/>
        <end position="140"/>
    </location>
</feature>
<feature type="strand" evidence="4">
    <location>
        <begin position="144"/>
        <end position="149"/>
    </location>
</feature>
<feature type="helix" evidence="4">
    <location>
        <begin position="151"/>
        <end position="153"/>
    </location>
</feature>
<feature type="turn" evidence="4">
    <location>
        <begin position="154"/>
        <end position="157"/>
    </location>
</feature>
<feature type="strand" evidence="4">
    <location>
        <begin position="159"/>
        <end position="165"/>
    </location>
</feature>
<comment type="function">
    <text evidence="1">Participates in electron transfer between P700 and the cytochrome b6-f complex in photosystem I.</text>
</comment>
<comment type="cofactor">
    <cofactor evidence="1">
        <name>Cu(2+)</name>
        <dbReference type="ChEBI" id="CHEBI:29036"/>
    </cofactor>
</comment>
<comment type="subcellular location">
    <subcellularLocation>
        <location evidence="1">Plastid</location>
        <location evidence="1">Chloroplast thylakoid membrane</location>
        <topology evidence="1">Peripheral membrane protein</topology>
        <orientation evidence="1">Lumenal side</orientation>
    </subcellularLocation>
    <text>Loosely bound to the inner thylakoid membrane surface in chloroplasts (PubMed:10220581).</text>
</comment>
<comment type="similarity">
    <text evidence="2">Belongs to the plastocyanin family.</text>
</comment>
<dbReference type="EMBL" id="X02965">
    <property type="protein sequence ID" value="CAA26709.1"/>
    <property type="molecule type" value="mRNA"/>
</dbReference>
<dbReference type="PIR" id="A24404">
    <property type="entry name" value="CUQH"/>
</dbReference>
<dbReference type="PDB" id="1BYO">
    <property type="method" value="X-ray"/>
    <property type="resolution" value="2.00 A"/>
    <property type="chains" value="A/B=67-165"/>
</dbReference>
<dbReference type="PDB" id="1BYP">
    <property type="method" value="X-ray"/>
    <property type="resolution" value="1.75 A"/>
    <property type="chains" value="A=67-165"/>
</dbReference>
<dbReference type="PDBsum" id="1BYO"/>
<dbReference type="PDBsum" id="1BYP"/>
<dbReference type="SMR" id="P07030"/>
<dbReference type="EvolutionaryTrace" id="P07030"/>
<dbReference type="GO" id="GO:0009543">
    <property type="term" value="C:chloroplast thylakoid lumen"/>
    <property type="evidence" value="ECO:0007669"/>
    <property type="project" value="TreeGrafter"/>
</dbReference>
<dbReference type="GO" id="GO:0009535">
    <property type="term" value="C:chloroplast thylakoid membrane"/>
    <property type="evidence" value="ECO:0007669"/>
    <property type="project" value="UniProtKB-SubCell"/>
</dbReference>
<dbReference type="GO" id="GO:0005507">
    <property type="term" value="F:copper ion binding"/>
    <property type="evidence" value="ECO:0007669"/>
    <property type="project" value="InterPro"/>
</dbReference>
<dbReference type="GO" id="GO:0046028">
    <property type="term" value="F:electron transporter, transferring electrons from cytochrome b6/f complex of photosystem II activity"/>
    <property type="evidence" value="ECO:0007669"/>
    <property type="project" value="TreeGrafter"/>
</dbReference>
<dbReference type="CDD" id="cd04219">
    <property type="entry name" value="Plastocyanin"/>
    <property type="match status" value="1"/>
</dbReference>
<dbReference type="Gene3D" id="2.60.40.420">
    <property type="entry name" value="Cupredoxins - blue copper proteins"/>
    <property type="match status" value="1"/>
</dbReference>
<dbReference type="InterPro" id="IPR000923">
    <property type="entry name" value="BlueCu_1"/>
</dbReference>
<dbReference type="InterPro" id="IPR028871">
    <property type="entry name" value="BlueCu_1_BS"/>
</dbReference>
<dbReference type="InterPro" id="IPR001235">
    <property type="entry name" value="Copper_blue_Plastocyanin"/>
</dbReference>
<dbReference type="InterPro" id="IPR008972">
    <property type="entry name" value="Cupredoxin"/>
</dbReference>
<dbReference type="InterPro" id="IPR002387">
    <property type="entry name" value="Plastocyanin"/>
</dbReference>
<dbReference type="NCBIfam" id="TIGR02656">
    <property type="entry name" value="cyanin_plasto"/>
    <property type="match status" value="1"/>
</dbReference>
<dbReference type="PANTHER" id="PTHR34192">
    <property type="entry name" value="PLASTOCYANIN MAJOR ISOFORM, CHLOROPLASTIC-RELATED"/>
    <property type="match status" value="1"/>
</dbReference>
<dbReference type="PANTHER" id="PTHR34192:SF10">
    <property type="entry name" value="PLASTOCYANIN MAJOR ISOFORM, CHLOROPLASTIC-RELATED"/>
    <property type="match status" value="1"/>
</dbReference>
<dbReference type="Pfam" id="PF00127">
    <property type="entry name" value="Copper-bind"/>
    <property type="match status" value="1"/>
</dbReference>
<dbReference type="PRINTS" id="PR00156">
    <property type="entry name" value="COPPERBLUE"/>
</dbReference>
<dbReference type="PRINTS" id="PR00157">
    <property type="entry name" value="PLASTOCYANIN"/>
</dbReference>
<dbReference type="SUPFAM" id="SSF49503">
    <property type="entry name" value="Cupredoxins"/>
    <property type="match status" value="1"/>
</dbReference>
<dbReference type="PROSITE" id="PS00196">
    <property type="entry name" value="COPPER_BLUE"/>
    <property type="match status" value="1"/>
</dbReference>
<proteinExistence type="evidence at protein level"/>
<gene>
    <name type="primary">PETE</name>
</gene>
<evidence type="ECO:0000269" key="1">
    <source>
    </source>
</evidence>
<evidence type="ECO:0000305" key="2"/>
<evidence type="ECO:0007829" key="3">
    <source>
        <dbReference type="PDB" id="1BYO"/>
    </source>
</evidence>
<evidence type="ECO:0007829" key="4">
    <source>
        <dbReference type="PDB" id="1BYP"/>
    </source>
</evidence>
<sequence>MATVTSSAAVAIPSFAGLKASSTTRAATVKVAVATPRMSIKASLKDVGVVVAATAAAGILAGNAMAAEVLLGSSDGGLAFVPSDLSIASGEKITFKNNAGFPHNVVFDEDEVPAGVDVTKISMPEEDLLNAPGEEYSVTLTEKGTYKFYCAPHAGAGMVGKVTVN</sequence>
<reference key="1">
    <citation type="journal article" date="1985" name="Nature">
        <title>Sequence of the precursor of the chloroplast thylakoid lumen protein plastocyanin.</title>
        <authorList>
            <person name="Smeekens S."/>
            <person name="de Groot M."/>
            <person name="van Binsbergen J."/>
            <person name="Weisbeek P.J."/>
        </authorList>
    </citation>
    <scope>NUCLEOTIDE SEQUENCE [MRNA]</scope>
</reference>
<reference key="2">
    <citation type="journal article" date="1999" name="J. Biochem.">
        <title>Crystal structures of wild-type and mutant plastocyanins from a higher plant, Silene.</title>
        <authorList>
            <person name="Sugawara H."/>
            <person name="Inoue T."/>
            <person name="Li C."/>
            <person name="Gotowda M."/>
            <person name="Hibino T."/>
            <person name="Takabe T."/>
            <person name="Kai Y."/>
        </authorList>
    </citation>
    <scope>X-RAY CRYSTALLOGRAPHY (1.75 ANGSTROMS) OF 67-165 IN COMPLEX WITH COPPER</scope>
    <scope>FUNCTION</scope>
    <scope>COFACTOR</scope>
    <scope>SUBCELLULAR LOCATION</scope>
    <scope>MUTAGENESIS OF 109-GLU-ASP-110</scope>
</reference>
<accession>P07030</accession>